<comment type="subcellular location">
    <subcellularLocation>
        <location evidence="1">Cell membrane</location>
        <topology evidence="1">Lipid-anchor</topology>
    </subcellularLocation>
</comment>
<comment type="similarity">
    <text evidence="2">Belongs to the staphylococcal tandem lipoprotein family.</text>
</comment>
<comment type="sequence caution" evidence="2">
    <conflict type="erroneous initiation">
        <sequence resource="EMBL-CDS" id="BAB94262"/>
    </conflict>
</comment>
<gene>
    <name type="primary">lpl10</name>
    <name type="ordered locus">MW0397</name>
</gene>
<sequence>MGYLKGFALYISILILIVFIAGCGKSDKTKEDSKEAQIKKSFEKTLDMYPIKNLEDLYDKEGYRDGEFKKGDKGTWTLLTSFAKSNKPGEIDDEGMVLFLNRNIKKATGYYYTSKVHDEFNEKEHQKKYHVELKNNKIVLLDNVEDSKLKNKIENFKFFSQYADFRDFKNYKNGNISSADNVPSFDAEYQISNTDKNVKKLREVYPITTKKSPVLKLHIDGDIKGSSIGYKNIEFNFSKVKDEETAVRDFVNFGPSDGVS</sequence>
<feature type="signal peptide" evidence="1">
    <location>
        <begin position="1"/>
        <end position="22"/>
    </location>
</feature>
<feature type="chain" id="PRO_0000282179" description="Uncharacterized lipoprotein MW0397">
    <location>
        <begin position="23"/>
        <end position="260"/>
    </location>
</feature>
<feature type="lipid moiety-binding region" description="N-palmitoyl cysteine" evidence="1">
    <location>
        <position position="23"/>
    </location>
</feature>
<feature type="lipid moiety-binding region" description="S-diacylglycerol cysteine" evidence="1">
    <location>
        <position position="23"/>
    </location>
</feature>
<proteinExistence type="inferred from homology"/>
<name>Y397_STAAW</name>
<dbReference type="EMBL" id="BA000033">
    <property type="protein sequence ID" value="BAB94262.1"/>
    <property type="status" value="ALT_INIT"/>
    <property type="molecule type" value="Genomic_DNA"/>
</dbReference>
<dbReference type="RefSeq" id="WP_001826822.1">
    <property type="nucleotide sequence ID" value="NC_003923.1"/>
</dbReference>
<dbReference type="SMR" id="Q8NY39"/>
<dbReference type="KEGG" id="sam:MW0397"/>
<dbReference type="HOGENOM" id="CLU_071589_0_1_9"/>
<dbReference type="GO" id="GO:0005886">
    <property type="term" value="C:plasma membrane"/>
    <property type="evidence" value="ECO:0007669"/>
    <property type="project" value="UniProtKB-SubCell"/>
</dbReference>
<dbReference type="Gene3D" id="2.50.20.40">
    <property type="match status" value="1"/>
</dbReference>
<dbReference type="InterPro" id="IPR007595">
    <property type="entry name" value="Csa"/>
</dbReference>
<dbReference type="InterPro" id="IPR038641">
    <property type="entry name" value="Csa_sf"/>
</dbReference>
<dbReference type="NCBIfam" id="TIGR01742">
    <property type="entry name" value="SA_tandem_lipo"/>
    <property type="match status" value="1"/>
</dbReference>
<dbReference type="Pfam" id="PF04507">
    <property type="entry name" value="DUF576"/>
    <property type="match status" value="1"/>
</dbReference>
<dbReference type="PROSITE" id="PS51257">
    <property type="entry name" value="PROKAR_LIPOPROTEIN"/>
    <property type="match status" value="1"/>
</dbReference>
<evidence type="ECO:0000255" key="1">
    <source>
        <dbReference type="PROSITE-ProRule" id="PRU00303"/>
    </source>
</evidence>
<evidence type="ECO:0000305" key="2"/>
<accession>Q8NY39</accession>
<keyword id="KW-1003">Cell membrane</keyword>
<keyword id="KW-0449">Lipoprotein</keyword>
<keyword id="KW-0472">Membrane</keyword>
<keyword id="KW-0564">Palmitate</keyword>
<keyword id="KW-0732">Signal</keyword>
<organism>
    <name type="scientific">Staphylococcus aureus (strain MW2)</name>
    <dbReference type="NCBI Taxonomy" id="196620"/>
    <lineage>
        <taxon>Bacteria</taxon>
        <taxon>Bacillati</taxon>
        <taxon>Bacillota</taxon>
        <taxon>Bacilli</taxon>
        <taxon>Bacillales</taxon>
        <taxon>Staphylococcaceae</taxon>
        <taxon>Staphylococcus</taxon>
    </lineage>
</organism>
<protein>
    <recommendedName>
        <fullName>Uncharacterized lipoprotein MW0397</fullName>
    </recommendedName>
</protein>
<reference key="1">
    <citation type="journal article" date="2002" name="Lancet">
        <title>Genome and virulence determinants of high virulence community-acquired MRSA.</title>
        <authorList>
            <person name="Baba T."/>
            <person name="Takeuchi F."/>
            <person name="Kuroda M."/>
            <person name="Yuzawa H."/>
            <person name="Aoki K."/>
            <person name="Oguchi A."/>
            <person name="Nagai Y."/>
            <person name="Iwama N."/>
            <person name="Asano K."/>
            <person name="Naimi T."/>
            <person name="Kuroda H."/>
            <person name="Cui L."/>
            <person name="Yamamoto K."/>
            <person name="Hiramatsu K."/>
        </authorList>
    </citation>
    <scope>NUCLEOTIDE SEQUENCE [LARGE SCALE GENOMIC DNA]</scope>
    <source>
        <strain>MW2</strain>
    </source>
</reference>